<dbReference type="EC" id="2.4.1.21" evidence="1"/>
<dbReference type="EMBL" id="CP000812">
    <property type="protein sequence ID" value="ABV33954.1"/>
    <property type="molecule type" value="Genomic_DNA"/>
</dbReference>
<dbReference type="RefSeq" id="WP_012003430.1">
    <property type="nucleotide sequence ID" value="NZ_BSDV01000001.1"/>
</dbReference>
<dbReference type="SMR" id="A8F720"/>
<dbReference type="STRING" id="416591.Tlet_1397"/>
<dbReference type="CAZy" id="GT5">
    <property type="family name" value="Glycosyltransferase Family 5"/>
</dbReference>
<dbReference type="KEGG" id="tle:Tlet_1397"/>
<dbReference type="eggNOG" id="COG0297">
    <property type="taxonomic scope" value="Bacteria"/>
</dbReference>
<dbReference type="HOGENOM" id="CLU_009583_18_2_0"/>
<dbReference type="OrthoDB" id="9808590at2"/>
<dbReference type="UniPathway" id="UPA00164"/>
<dbReference type="Proteomes" id="UP000002016">
    <property type="component" value="Chromosome"/>
</dbReference>
<dbReference type="GO" id="GO:0009011">
    <property type="term" value="F:alpha-1,4-glucan glucosyltransferase (ADP-glucose donor) activity"/>
    <property type="evidence" value="ECO:0007669"/>
    <property type="project" value="UniProtKB-UniRule"/>
</dbReference>
<dbReference type="GO" id="GO:0004373">
    <property type="term" value="F:alpha-1,4-glucan glucosyltransferase (UDP-glucose donor) activity"/>
    <property type="evidence" value="ECO:0007669"/>
    <property type="project" value="InterPro"/>
</dbReference>
<dbReference type="GO" id="GO:0005978">
    <property type="term" value="P:glycogen biosynthetic process"/>
    <property type="evidence" value="ECO:0007669"/>
    <property type="project" value="UniProtKB-UniRule"/>
</dbReference>
<dbReference type="CDD" id="cd03791">
    <property type="entry name" value="GT5_Glycogen_synthase_DULL1-like"/>
    <property type="match status" value="1"/>
</dbReference>
<dbReference type="Gene3D" id="3.40.50.2000">
    <property type="entry name" value="Glycogen Phosphorylase B"/>
    <property type="match status" value="2"/>
</dbReference>
<dbReference type="HAMAP" id="MF_00484">
    <property type="entry name" value="Glycogen_synth"/>
    <property type="match status" value="1"/>
</dbReference>
<dbReference type="InterPro" id="IPR001296">
    <property type="entry name" value="Glyco_trans_1"/>
</dbReference>
<dbReference type="InterPro" id="IPR011835">
    <property type="entry name" value="GS/SS"/>
</dbReference>
<dbReference type="InterPro" id="IPR013534">
    <property type="entry name" value="Starch_synth_cat_dom"/>
</dbReference>
<dbReference type="NCBIfam" id="TIGR02095">
    <property type="entry name" value="glgA"/>
    <property type="match status" value="1"/>
</dbReference>
<dbReference type="PANTHER" id="PTHR45825:SF11">
    <property type="entry name" value="ALPHA AMYLASE DOMAIN-CONTAINING PROTEIN"/>
    <property type="match status" value="1"/>
</dbReference>
<dbReference type="PANTHER" id="PTHR45825">
    <property type="entry name" value="GRANULE-BOUND STARCH SYNTHASE 1, CHLOROPLASTIC/AMYLOPLASTIC"/>
    <property type="match status" value="1"/>
</dbReference>
<dbReference type="Pfam" id="PF08323">
    <property type="entry name" value="Glyco_transf_5"/>
    <property type="match status" value="1"/>
</dbReference>
<dbReference type="Pfam" id="PF00534">
    <property type="entry name" value="Glycos_transf_1"/>
    <property type="match status" value="1"/>
</dbReference>
<dbReference type="SUPFAM" id="SSF53756">
    <property type="entry name" value="UDP-Glycosyltransferase/glycogen phosphorylase"/>
    <property type="match status" value="1"/>
</dbReference>
<proteinExistence type="inferred from homology"/>
<evidence type="ECO:0000255" key="1">
    <source>
        <dbReference type="HAMAP-Rule" id="MF_00484"/>
    </source>
</evidence>
<feature type="chain" id="PRO_1000060435" description="Glycogen synthase">
    <location>
        <begin position="1"/>
        <end position="486"/>
    </location>
</feature>
<feature type="binding site" evidence="1">
    <location>
        <position position="15"/>
    </location>
    <ligand>
        <name>ADP-alpha-D-glucose</name>
        <dbReference type="ChEBI" id="CHEBI:57498"/>
    </ligand>
</feature>
<protein>
    <recommendedName>
        <fullName evidence="1">Glycogen synthase</fullName>
        <ecNumber evidence="1">2.4.1.21</ecNumber>
    </recommendedName>
    <alternativeName>
        <fullName evidence="1">Starch [bacterial glycogen] synthase</fullName>
    </alternativeName>
</protein>
<gene>
    <name evidence="1" type="primary">glgA</name>
    <name type="ordered locus">Tlet_1397</name>
</gene>
<comment type="function">
    <text evidence="1">Synthesizes alpha-1,4-glucan chains using ADP-glucose.</text>
</comment>
<comment type="catalytic activity">
    <reaction evidence="1">
        <text>[(1-&gt;4)-alpha-D-glucosyl](n) + ADP-alpha-D-glucose = [(1-&gt;4)-alpha-D-glucosyl](n+1) + ADP + H(+)</text>
        <dbReference type="Rhea" id="RHEA:18189"/>
        <dbReference type="Rhea" id="RHEA-COMP:9584"/>
        <dbReference type="Rhea" id="RHEA-COMP:9587"/>
        <dbReference type="ChEBI" id="CHEBI:15378"/>
        <dbReference type="ChEBI" id="CHEBI:15444"/>
        <dbReference type="ChEBI" id="CHEBI:57498"/>
        <dbReference type="ChEBI" id="CHEBI:456216"/>
        <dbReference type="EC" id="2.4.1.21"/>
    </reaction>
</comment>
<comment type="pathway">
    <text evidence="1">Glycan biosynthesis; glycogen biosynthesis.</text>
</comment>
<comment type="similarity">
    <text evidence="1">Belongs to the glycosyltransferase 1 family. Bacterial/plant glycogen synthase subfamily.</text>
</comment>
<name>GLGA_PSELT</name>
<accession>A8F720</accession>
<reference key="1">
    <citation type="submission" date="2007-08" db="EMBL/GenBank/DDBJ databases">
        <title>Complete sequence of Thermotoga lettingae TMO.</title>
        <authorList>
            <consortium name="US DOE Joint Genome Institute"/>
            <person name="Copeland A."/>
            <person name="Lucas S."/>
            <person name="Lapidus A."/>
            <person name="Barry K."/>
            <person name="Glavina del Rio T."/>
            <person name="Dalin E."/>
            <person name="Tice H."/>
            <person name="Pitluck S."/>
            <person name="Foster B."/>
            <person name="Bruce D."/>
            <person name="Schmutz J."/>
            <person name="Larimer F."/>
            <person name="Land M."/>
            <person name="Hauser L."/>
            <person name="Kyrpides N."/>
            <person name="Mikhailova N."/>
            <person name="Nelson K."/>
            <person name="Gogarten J.P."/>
            <person name="Noll K."/>
            <person name="Richardson P."/>
        </authorList>
    </citation>
    <scope>NUCLEOTIDE SEQUENCE [LARGE SCALE GENOMIC DNA]</scope>
    <source>
        <strain>ATCC BAA-301 / DSM 14385 / NBRC 107922 / TMO</strain>
    </source>
</reference>
<keyword id="KW-0320">Glycogen biosynthesis</keyword>
<keyword id="KW-0328">Glycosyltransferase</keyword>
<keyword id="KW-1185">Reference proteome</keyword>
<keyword id="KW-0808">Transferase</keyword>
<sequence>MRVAMVAYEVYPFAKVGGLADVVGSLPKVIEKQGVKVTVFMPFHKIVSKNCEKLGLEIKEVARAISLPNLQTKEKFDLYKSTVPATNVSVYFISNDYYFSADNVYEGPDLAEQSIFFSNAAIEAMKYLSETFDIVHAHDWQTGLVPVYLKTLYRTDPFFNRTATVFTIHNLGYQGVFNPGYMKFAGLPAYLFNIDGLEFYGQINFLKGGILFSDIVTTVSPTYAQEIQTEQFGEKLDGVLRLRAEDLYGILNGIDYSEYNPATDKRIYVNYDIDHIEKKKMNKSELQKELNLQVRDDVPLIGMINRLVDQKGLDLIEKIVDYMMMFDIQFVVLGTGDKKYEEFFKNIEKKYPQKISSNMKFDVDLAQKIYAASDMFLMPSRYEPCGLGQMYSLRYGTVPIVRYTGGLADSVKEYDPKTRDGNGFGFREYDTAHLLETVAKAVYFYKKEKDHWGKVVKNAMKTDVSWDRSAKQYLKIYQEALRKKQF</sequence>
<organism>
    <name type="scientific">Pseudothermotoga lettingae (strain ATCC BAA-301 / DSM 14385 / NBRC 107922 / TMO)</name>
    <name type="common">Thermotoga lettingae</name>
    <dbReference type="NCBI Taxonomy" id="416591"/>
    <lineage>
        <taxon>Bacteria</taxon>
        <taxon>Thermotogati</taxon>
        <taxon>Thermotogota</taxon>
        <taxon>Thermotogae</taxon>
        <taxon>Thermotogales</taxon>
        <taxon>Thermotogaceae</taxon>
        <taxon>Pseudothermotoga</taxon>
    </lineage>
</organism>